<name>APT_CANAL</name>
<accession>Q5ALX8</accession>
<accession>A0A1D8PGC1</accession>
<proteinExistence type="inferred from homology"/>
<sequence length="188" mass="20877">MSDRVLEINALAKELKANLKQFPNFPKEGILFEDFLPIFTKPDLFNKLVKAFKLHVGEQKIDYVIGLESRGFLFGPTLALALNAGFVPVRKPGKLPGPTFKVEFQKEYGSDEFEIQQDVIPKGAKVLIVDDILATGGSAFGAGELAKKTGAEIVEYLFVMELDFLKGRDKLDAPVYTLFGGQEEKFTE</sequence>
<dbReference type="EC" id="2.4.2.7"/>
<dbReference type="EMBL" id="CP017624">
    <property type="protein sequence ID" value="AOW27189.1"/>
    <property type="molecule type" value="Genomic_DNA"/>
</dbReference>
<dbReference type="RefSeq" id="XP_722498.1">
    <property type="nucleotide sequence ID" value="XM_717405.1"/>
</dbReference>
<dbReference type="SMR" id="Q5ALX8"/>
<dbReference type="FunCoup" id="Q5ALX8">
    <property type="interactions" value="583"/>
</dbReference>
<dbReference type="STRING" id="237561.Q5ALX8"/>
<dbReference type="EnsemblFungi" id="C2_01430W_A-T">
    <property type="protein sequence ID" value="C2_01430W_A-T-p1"/>
    <property type="gene ID" value="C2_01430W_A"/>
</dbReference>
<dbReference type="GeneID" id="3635842"/>
<dbReference type="KEGG" id="cal:CAALFM_C201430WA"/>
<dbReference type="CGD" id="CAL0000192887">
    <property type="gene designation" value="APT1"/>
</dbReference>
<dbReference type="VEuPathDB" id="FungiDB:C2_01430W_A"/>
<dbReference type="eggNOG" id="KOG1712">
    <property type="taxonomic scope" value="Eukaryota"/>
</dbReference>
<dbReference type="HOGENOM" id="CLU_063339_1_0_1"/>
<dbReference type="InParanoid" id="Q5ALX8"/>
<dbReference type="OMA" id="ITHFVYH"/>
<dbReference type="OrthoDB" id="363185at2759"/>
<dbReference type="UniPathway" id="UPA00588">
    <property type="reaction ID" value="UER00646"/>
</dbReference>
<dbReference type="PRO" id="PR:Q5ALX8"/>
<dbReference type="Proteomes" id="UP000000559">
    <property type="component" value="Chromosome 2"/>
</dbReference>
<dbReference type="GO" id="GO:0005737">
    <property type="term" value="C:cytoplasm"/>
    <property type="evidence" value="ECO:0000318"/>
    <property type="project" value="GO_Central"/>
</dbReference>
<dbReference type="GO" id="GO:0062040">
    <property type="term" value="C:fungal biofilm matrix"/>
    <property type="evidence" value="ECO:0000314"/>
    <property type="project" value="CGD"/>
</dbReference>
<dbReference type="GO" id="GO:0005634">
    <property type="term" value="C:nucleus"/>
    <property type="evidence" value="ECO:0007669"/>
    <property type="project" value="UniProtKB-SubCell"/>
</dbReference>
<dbReference type="GO" id="GO:0002055">
    <property type="term" value="F:adenine binding"/>
    <property type="evidence" value="ECO:0000318"/>
    <property type="project" value="GO_Central"/>
</dbReference>
<dbReference type="GO" id="GO:0003999">
    <property type="term" value="F:adenine phosphoribosyltransferase activity"/>
    <property type="evidence" value="ECO:0000318"/>
    <property type="project" value="GO_Central"/>
</dbReference>
<dbReference type="GO" id="GO:0016208">
    <property type="term" value="F:AMP binding"/>
    <property type="evidence" value="ECO:0000318"/>
    <property type="project" value="GO_Central"/>
</dbReference>
<dbReference type="GO" id="GO:0046872">
    <property type="term" value="F:metal ion binding"/>
    <property type="evidence" value="ECO:0007669"/>
    <property type="project" value="UniProtKB-KW"/>
</dbReference>
<dbReference type="GO" id="GO:0006168">
    <property type="term" value="P:adenine salvage"/>
    <property type="evidence" value="ECO:0000318"/>
    <property type="project" value="GO_Central"/>
</dbReference>
<dbReference type="GO" id="GO:0044209">
    <property type="term" value="P:AMP salvage"/>
    <property type="evidence" value="ECO:0000318"/>
    <property type="project" value="GO_Central"/>
</dbReference>
<dbReference type="GO" id="GO:0006166">
    <property type="term" value="P:purine ribonucleoside salvage"/>
    <property type="evidence" value="ECO:0007669"/>
    <property type="project" value="UniProtKB-KW"/>
</dbReference>
<dbReference type="CDD" id="cd06223">
    <property type="entry name" value="PRTases_typeI"/>
    <property type="match status" value="1"/>
</dbReference>
<dbReference type="FunFam" id="3.40.50.2020:FF:000004">
    <property type="entry name" value="Adenine phosphoribosyltransferase"/>
    <property type="match status" value="1"/>
</dbReference>
<dbReference type="Gene3D" id="3.40.50.2020">
    <property type="match status" value="1"/>
</dbReference>
<dbReference type="HAMAP" id="MF_00004">
    <property type="entry name" value="Aden_phosphoribosyltr"/>
    <property type="match status" value="1"/>
</dbReference>
<dbReference type="InterPro" id="IPR005764">
    <property type="entry name" value="Ade_phspho_trans"/>
</dbReference>
<dbReference type="InterPro" id="IPR000836">
    <property type="entry name" value="PRibTrfase_dom"/>
</dbReference>
<dbReference type="InterPro" id="IPR029057">
    <property type="entry name" value="PRTase-like"/>
</dbReference>
<dbReference type="InterPro" id="IPR050054">
    <property type="entry name" value="UPRTase/APRTase"/>
</dbReference>
<dbReference type="NCBIfam" id="TIGR01090">
    <property type="entry name" value="apt"/>
    <property type="match status" value="1"/>
</dbReference>
<dbReference type="NCBIfam" id="NF002636">
    <property type="entry name" value="PRK02304.1-5"/>
    <property type="match status" value="1"/>
</dbReference>
<dbReference type="PANTHER" id="PTHR32315">
    <property type="entry name" value="ADENINE PHOSPHORIBOSYLTRANSFERASE"/>
    <property type="match status" value="1"/>
</dbReference>
<dbReference type="PANTHER" id="PTHR32315:SF3">
    <property type="entry name" value="ADENINE PHOSPHORIBOSYLTRANSFERASE"/>
    <property type="match status" value="1"/>
</dbReference>
<dbReference type="Pfam" id="PF00156">
    <property type="entry name" value="Pribosyltran"/>
    <property type="match status" value="1"/>
</dbReference>
<dbReference type="SUPFAM" id="SSF53271">
    <property type="entry name" value="PRTase-like"/>
    <property type="match status" value="1"/>
</dbReference>
<dbReference type="PROSITE" id="PS00103">
    <property type="entry name" value="PUR_PYR_PR_TRANSFER"/>
    <property type="match status" value="1"/>
</dbReference>
<evidence type="ECO:0000250" key="1"/>
<evidence type="ECO:0000305" key="2"/>
<feature type="chain" id="PRO_0000227899" description="Adenine phosphoribosyltransferase">
    <location>
        <begin position="1"/>
        <end position="188"/>
    </location>
</feature>
<feature type="binding site" evidence="1">
    <location>
        <begin position="134"/>
        <end position="138"/>
    </location>
    <ligand>
        <name>AMP</name>
        <dbReference type="ChEBI" id="CHEBI:456215"/>
    </ligand>
</feature>
<gene>
    <name type="primary">APT1</name>
    <name type="ordered locus">CAALFM_C201430WA</name>
    <name type="ORF">CaO19.1448</name>
    <name type="ORF">CaO19.9023</name>
</gene>
<keyword id="KW-0963">Cytoplasm</keyword>
<keyword id="KW-0328">Glycosyltransferase</keyword>
<keyword id="KW-0460">Magnesium</keyword>
<keyword id="KW-0479">Metal-binding</keyword>
<keyword id="KW-0539">Nucleus</keyword>
<keyword id="KW-0660">Purine salvage</keyword>
<keyword id="KW-1185">Reference proteome</keyword>
<keyword id="KW-0808">Transferase</keyword>
<protein>
    <recommendedName>
        <fullName>Adenine phosphoribosyltransferase</fullName>
        <shortName>APRT</shortName>
        <ecNumber>2.4.2.7</ecNumber>
    </recommendedName>
</protein>
<reference key="1">
    <citation type="journal article" date="2004" name="Proc. Natl. Acad. Sci. U.S.A.">
        <title>The diploid genome sequence of Candida albicans.</title>
        <authorList>
            <person name="Jones T."/>
            <person name="Federspiel N.A."/>
            <person name="Chibana H."/>
            <person name="Dungan J."/>
            <person name="Kalman S."/>
            <person name="Magee B.B."/>
            <person name="Newport G."/>
            <person name="Thorstenson Y.R."/>
            <person name="Agabian N."/>
            <person name="Magee P.T."/>
            <person name="Davis R.W."/>
            <person name="Scherer S."/>
        </authorList>
    </citation>
    <scope>NUCLEOTIDE SEQUENCE [LARGE SCALE GENOMIC DNA]</scope>
    <source>
        <strain>SC5314 / ATCC MYA-2876</strain>
    </source>
</reference>
<reference key="2">
    <citation type="journal article" date="2007" name="Genome Biol.">
        <title>Assembly of the Candida albicans genome into sixteen supercontigs aligned on the eight chromosomes.</title>
        <authorList>
            <person name="van het Hoog M."/>
            <person name="Rast T.J."/>
            <person name="Martchenko M."/>
            <person name="Grindle S."/>
            <person name="Dignard D."/>
            <person name="Hogues H."/>
            <person name="Cuomo C."/>
            <person name="Berriman M."/>
            <person name="Scherer S."/>
            <person name="Magee B.B."/>
            <person name="Whiteway M."/>
            <person name="Chibana H."/>
            <person name="Nantel A."/>
            <person name="Magee P.T."/>
        </authorList>
    </citation>
    <scope>GENOME REANNOTATION</scope>
    <source>
        <strain>SC5314 / ATCC MYA-2876</strain>
    </source>
</reference>
<reference key="3">
    <citation type="journal article" date="2013" name="Genome Biol.">
        <title>Assembly of a phased diploid Candida albicans genome facilitates allele-specific measurements and provides a simple model for repeat and indel structure.</title>
        <authorList>
            <person name="Muzzey D."/>
            <person name="Schwartz K."/>
            <person name="Weissman J.S."/>
            <person name="Sherlock G."/>
        </authorList>
    </citation>
    <scope>NUCLEOTIDE SEQUENCE [LARGE SCALE GENOMIC DNA]</scope>
    <scope>GENOME REANNOTATION</scope>
    <source>
        <strain>SC5314 / ATCC MYA-2876</strain>
    </source>
</reference>
<organism>
    <name type="scientific">Candida albicans (strain SC5314 / ATCC MYA-2876)</name>
    <name type="common">Yeast</name>
    <dbReference type="NCBI Taxonomy" id="237561"/>
    <lineage>
        <taxon>Eukaryota</taxon>
        <taxon>Fungi</taxon>
        <taxon>Dikarya</taxon>
        <taxon>Ascomycota</taxon>
        <taxon>Saccharomycotina</taxon>
        <taxon>Pichiomycetes</taxon>
        <taxon>Debaryomycetaceae</taxon>
        <taxon>Candida/Lodderomyces clade</taxon>
        <taxon>Candida</taxon>
    </lineage>
</organism>
<comment type="function">
    <text evidence="1">Catalyzes a salvage reaction resulting in the formation of AMP, that is energically less costly than de novo synthesis.</text>
</comment>
<comment type="catalytic activity">
    <reaction>
        <text>AMP + diphosphate = 5-phospho-alpha-D-ribose 1-diphosphate + adenine</text>
        <dbReference type="Rhea" id="RHEA:16609"/>
        <dbReference type="ChEBI" id="CHEBI:16708"/>
        <dbReference type="ChEBI" id="CHEBI:33019"/>
        <dbReference type="ChEBI" id="CHEBI:58017"/>
        <dbReference type="ChEBI" id="CHEBI:456215"/>
        <dbReference type="EC" id="2.4.2.7"/>
    </reaction>
</comment>
<comment type="cofactor">
    <cofactor evidence="1">
        <name>Mg(2+)</name>
        <dbReference type="ChEBI" id="CHEBI:18420"/>
    </cofactor>
</comment>
<comment type="pathway">
    <text>Purine metabolism; AMP biosynthesis via salvage pathway; AMP from adenine: step 1/1.</text>
</comment>
<comment type="subunit">
    <text evidence="1">Homodimer.</text>
</comment>
<comment type="subcellular location">
    <subcellularLocation>
        <location evidence="1">Cytoplasm</location>
    </subcellularLocation>
    <subcellularLocation>
        <location evidence="1">Nucleus</location>
    </subcellularLocation>
</comment>
<comment type="similarity">
    <text evidence="2">Belongs to the purine/pyrimidine phosphoribosyltransferase family.</text>
</comment>